<name>NXP20_HUMAN</name>
<accession>Q8IWE2</accession>
<accession>A8K9W6</accession>
<accession>Q6MZV4</accession>
<accession>Q9BVL6</accession>
<protein>
    <recommendedName>
        <fullName>Protein NOXP20</fullName>
    </recommendedName>
    <alternativeName>
        <fullName>Nervous system overexpressed protein 20</fullName>
    </alternativeName>
    <alternativeName>
        <fullName>Protein FAM114A1</fullName>
    </alternativeName>
</protein>
<gene>
    <name type="primary">FAM114A1</name>
    <name type="synonym">NOXP20</name>
</gene>
<reference key="1">
    <citation type="journal article" date="2004" name="Nat. Genet.">
        <title>Complete sequencing and characterization of 21,243 full-length human cDNAs.</title>
        <authorList>
            <person name="Ota T."/>
            <person name="Suzuki Y."/>
            <person name="Nishikawa T."/>
            <person name="Otsuki T."/>
            <person name="Sugiyama T."/>
            <person name="Irie R."/>
            <person name="Wakamatsu A."/>
            <person name="Hayashi K."/>
            <person name="Sato H."/>
            <person name="Nagai K."/>
            <person name="Kimura K."/>
            <person name="Makita H."/>
            <person name="Sekine M."/>
            <person name="Obayashi M."/>
            <person name="Nishi T."/>
            <person name="Shibahara T."/>
            <person name="Tanaka T."/>
            <person name="Ishii S."/>
            <person name="Yamamoto J."/>
            <person name="Saito K."/>
            <person name="Kawai Y."/>
            <person name="Isono Y."/>
            <person name="Nakamura Y."/>
            <person name="Nagahari K."/>
            <person name="Murakami K."/>
            <person name="Yasuda T."/>
            <person name="Iwayanagi T."/>
            <person name="Wagatsuma M."/>
            <person name="Shiratori A."/>
            <person name="Sudo H."/>
            <person name="Hosoiri T."/>
            <person name="Kaku Y."/>
            <person name="Kodaira H."/>
            <person name="Kondo H."/>
            <person name="Sugawara M."/>
            <person name="Takahashi M."/>
            <person name="Kanda K."/>
            <person name="Yokoi T."/>
            <person name="Furuya T."/>
            <person name="Kikkawa E."/>
            <person name="Omura Y."/>
            <person name="Abe K."/>
            <person name="Kamihara K."/>
            <person name="Katsuta N."/>
            <person name="Sato K."/>
            <person name="Tanikawa M."/>
            <person name="Yamazaki M."/>
            <person name="Ninomiya K."/>
            <person name="Ishibashi T."/>
            <person name="Yamashita H."/>
            <person name="Murakawa K."/>
            <person name="Fujimori K."/>
            <person name="Tanai H."/>
            <person name="Kimata M."/>
            <person name="Watanabe M."/>
            <person name="Hiraoka S."/>
            <person name="Chiba Y."/>
            <person name="Ishida S."/>
            <person name="Ono Y."/>
            <person name="Takiguchi S."/>
            <person name="Watanabe S."/>
            <person name="Yosida M."/>
            <person name="Hotuta T."/>
            <person name="Kusano J."/>
            <person name="Kanehori K."/>
            <person name="Takahashi-Fujii A."/>
            <person name="Hara H."/>
            <person name="Tanase T.-O."/>
            <person name="Nomura Y."/>
            <person name="Togiya S."/>
            <person name="Komai F."/>
            <person name="Hara R."/>
            <person name="Takeuchi K."/>
            <person name="Arita M."/>
            <person name="Imose N."/>
            <person name="Musashino K."/>
            <person name="Yuuki H."/>
            <person name="Oshima A."/>
            <person name="Sasaki N."/>
            <person name="Aotsuka S."/>
            <person name="Yoshikawa Y."/>
            <person name="Matsunawa H."/>
            <person name="Ichihara T."/>
            <person name="Shiohata N."/>
            <person name="Sano S."/>
            <person name="Moriya S."/>
            <person name="Momiyama H."/>
            <person name="Satoh N."/>
            <person name="Takami S."/>
            <person name="Terashima Y."/>
            <person name="Suzuki O."/>
            <person name="Nakagawa S."/>
            <person name="Senoh A."/>
            <person name="Mizoguchi H."/>
            <person name="Goto Y."/>
            <person name="Shimizu F."/>
            <person name="Wakebe H."/>
            <person name="Hishigaki H."/>
            <person name="Watanabe T."/>
            <person name="Sugiyama A."/>
            <person name="Takemoto M."/>
            <person name="Kawakami B."/>
            <person name="Yamazaki M."/>
            <person name="Watanabe K."/>
            <person name="Kumagai A."/>
            <person name="Itakura S."/>
            <person name="Fukuzumi Y."/>
            <person name="Fujimori Y."/>
            <person name="Komiyama M."/>
            <person name="Tashiro H."/>
            <person name="Tanigami A."/>
            <person name="Fujiwara T."/>
            <person name="Ono T."/>
            <person name="Yamada K."/>
            <person name="Fujii Y."/>
            <person name="Ozaki K."/>
            <person name="Hirao M."/>
            <person name="Ohmori Y."/>
            <person name="Kawabata A."/>
            <person name="Hikiji T."/>
            <person name="Kobatake N."/>
            <person name="Inagaki H."/>
            <person name="Ikema Y."/>
            <person name="Okamoto S."/>
            <person name="Okitani R."/>
            <person name="Kawakami T."/>
            <person name="Noguchi S."/>
            <person name="Itoh T."/>
            <person name="Shigeta K."/>
            <person name="Senba T."/>
            <person name="Matsumura K."/>
            <person name="Nakajima Y."/>
            <person name="Mizuno T."/>
            <person name="Morinaga M."/>
            <person name="Sasaki M."/>
            <person name="Togashi T."/>
            <person name="Oyama M."/>
            <person name="Hata H."/>
            <person name="Watanabe M."/>
            <person name="Komatsu T."/>
            <person name="Mizushima-Sugano J."/>
            <person name="Satoh T."/>
            <person name="Shirai Y."/>
            <person name="Takahashi Y."/>
            <person name="Nakagawa K."/>
            <person name="Okumura K."/>
            <person name="Nagase T."/>
            <person name="Nomura N."/>
            <person name="Kikuchi H."/>
            <person name="Masuho Y."/>
            <person name="Yamashita R."/>
            <person name="Nakai K."/>
            <person name="Yada T."/>
            <person name="Nakamura Y."/>
            <person name="Ohara O."/>
            <person name="Isogai T."/>
            <person name="Sugano S."/>
        </authorList>
    </citation>
    <scope>NUCLEOTIDE SEQUENCE [LARGE SCALE MRNA] (ISOFORM 1)</scope>
    <source>
        <tissue>Trachea</tissue>
    </source>
</reference>
<reference key="2">
    <citation type="journal article" date="2007" name="BMC Genomics">
        <title>The full-ORF clone resource of the German cDNA consortium.</title>
        <authorList>
            <person name="Bechtel S."/>
            <person name="Rosenfelder H."/>
            <person name="Duda A."/>
            <person name="Schmidt C.P."/>
            <person name="Ernst U."/>
            <person name="Wellenreuther R."/>
            <person name="Mehrle A."/>
            <person name="Schuster C."/>
            <person name="Bahr A."/>
            <person name="Bloecker H."/>
            <person name="Heubner D."/>
            <person name="Hoerlein A."/>
            <person name="Michel G."/>
            <person name="Wedler H."/>
            <person name="Koehrer K."/>
            <person name="Ottenwaelder B."/>
            <person name="Poustka A."/>
            <person name="Wiemann S."/>
            <person name="Schupp I."/>
        </authorList>
    </citation>
    <scope>NUCLEOTIDE SEQUENCE [LARGE SCALE MRNA] (ISOFORM 2)</scope>
    <source>
        <tissue>Salivary gland</tissue>
    </source>
</reference>
<reference key="3">
    <citation type="journal article" date="2005" name="Nature">
        <title>Generation and annotation of the DNA sequences of human chromosomes 2 and 4.</title>
        <authorList>
            <person name="Hillier L.W."/>
            <person name="Graves T.A."/>
            <person name="Fulton R.S."/>
            <person name="Fulton L.A."/>
            <person name="Pepin K.H."/>
            <person name="Minx P."/>
            <person name="Wagner-McPherson C."/>
            <person name="Layman D."/>
            <person name="Wylie K."/>
            <person name="Sekhon M."/>
            <person name="Becker M.C."/>
            <person name="Fewell G.A."/>
            <person name="Delehaunty K.D."/>
            <person name="Miner T.L."/>
            <person name="Nash W.E."/>
            <person name="Kremitzki C."/>
            <person name="Oddy L."/>
            <person name="Du H."/>
            <person name="Sun H."/>
            <person name="Bradshaw-Cordum H."/>
            <person name="Ali J."/>
            <person name="Carter J."/>
            <person name="Cordes M."/>
            <person name="Harris A."/>
            <person name="Isak A."/>
            <person name="van Brunt A."/>
            <person name="Nguyen C."/>
            <person name="Du F."/>
            <person name="Courtney L."/>
            <person name="Kalicki J."/>
            <person name="Ozersky P."/>
            <person name="Abbott S."/>
            <person name="Armstrong J."/>
            <person name="Belter E.A."/>
            <person name="Caruso L."/>
            <person name="Cedroni M."/>
            <person name="Cotton M."/>
            <person name="Davidson T."/>
            <person name="Desai A."/>
            <person name="Elliott G."/>
            <person name="Erb T."/>
            <person name="Fronick C."/>
            <person name="Gaige T."/>
            <person name="Haakenson W."/>
            <person name="Haglund K."/>
            <person name="Holmes A."/>
            <person name="Harkins R."/>
            <person name="Kim K."/>
            <person name="Kruchowski S.S."/>
            <person name="Strong C.M."/>
            <person name="Grewal N."/>
            <person name="Goyea E."/>
            <person name="Hou S."/>
            <person name="Levy A."/>
            <person name="Martinka S."/>
            <person name="Mead K."/>
            <person name="McLellan M.D."/>
            <person name="Meyer R."/>
            <person name="Randall-Maher J."/>
            <person name="Tomlinson C."/>
            <person name="Dauphin-Kohlberg S."/>
            <person name="Kozlowicz-Reilly A."/>
            <person name="Shah N."/>
            <person name="Swearengen-Shahid S."/>
            <person name="Snider J."/>
            <person name="Strong J.T."/>
            <person name="Thompson J."/>
            <person name="Yoakum M."/>
            <person name="Leonard S."/>
            <person name="Pearman C."/>
            <person name="Trani L."/>
            <person name="Radionenko M."/>
            <person name="Waligorski J.E."/>
            <person name="Wang C."/>
            <person name="Rock S.M."/>
            <person name="Tin-Wollam A.-M."/>
            <person name="Maupin R."/>
            <person name="Latreille P."/>
            <person name="Wendl M.C."/>
            <person name="Yang S.-P."/>
            <person name="Pohl C."/>
            <person name="Wallis J.W."/>
            <person name="Spieth J."/>
            <person name="Bieri T.A."/>
            <person name="Berkowicz N."/>
            <person name="Nelson J.O."/>
            <person name="Osborne J."/>
            <person name="Ding L."/>
            <person name="Meyer R."/>
            <person name="Sabo A."/>
            <person name="Shotland Y."/>
            <person name="Sinha P."/>
            <person name="Wohldmann P.E."/>
            <person name="Cook L.L."/>
            <person name="Hickenbotham M.T."/>
            <person name="Eldred J."/>
            <person name="Williams D."/>
            <person name="Jones T.A."/>
            <person name="She X."/>
            <person name="Ciccarelli F.D."/>
            <person name="Izaurralde E."/>
            <person name="Taylor J."/>
            <person name="Schmutz J."/>
            <person name="Myers R.M."/>
            <person name="Cox D.R."/>
            <person name="Huang X."/>
            <person name="McPherson J.D."/>
            <person name="Mardis E.R."/>
            <person name="Clifton S.W."/>
            <person name="Warren W.C."/>
            <person name="Chinwalla A.T."/>
            <person name="Eddy S.R."/>
            <person name="Marra M.A."/>
            <person name="Ovcharenko I."/>
            <person name="Furey T.S."/>
            <person name="Miller W."/>
            <person name="Eichler E.E."/>
            <person name="Bork P."/>
            <person name="Suyama M."/>
            <person name="Torrents D."/>
            <person name="Waterston R.H."/>
            <person name="Wilson R.K."/>
        </authorList>
    </citation>
    <scope>NUCLEOTIDE SEQUENCE [LARGE SCALE GENOMIC DNA]</scope>
</reference>
<reference key="4">
    <citation type="journal article" date="2004" name="Genome Res.">
        <title>The status, quality, and expansion of the NIH full-length cDNA project: the Mammalian Gene Collection (MGC).</title>
        <authorList>
            <consortium name="The MGC Project Team"/>
        </authorList>
    </citation>
    <scope>NUCLEOTIDE SEQUENCE [LARGE SCALE MRNA] (ISOFORM 1)</scope>
    <scope>VARIANTS ARG-84 AND PRO-116</scope>
    <source>
        <tissue>Colon</tissue>
        <tissue>Kidney</tissue>
    </source>
</reference>
<reference key="5">
    <citation type="journal article" date="2008" name="Proc. Natl. Acad. Sci. U.S.A.">
        <title>A quantitative atlas of mitotic phosphorylation.</title>
        <authorList>
            <person name="Dephoure N."/>
            <person name="Zhou C."/>
            <person name="Villen J."/>
            <person name="Beausoleil S.A."/>
            <person name="Bakalarski C.E."/>
            <person name="Elledge S.J."/>
            <person name="Gygi S.P."/>
        </authorList>
    </citation>
    <scope>PHOSPHORYLATION [LARGE SCALE ANALYSIS] AT SER-196</scope>
    <scope>IDENTIFICATION BY MASS SPECTROMETRY [LARGE SCALE ANALYSIS]</scope>
    <source>
        <tissue>Cervix carcinoma</tissue>
    </source>
</reference>
<reference key="6">
    <citation type="journal article" date="2010" name="Sci. Signal.">
        <title>Quantitative phosphoproteomics reveals widespread full phosphorylation site occupancy during mitosis.</title>
        <authorList>
            <person name="Olsen J.V."/>
            <person name="Vermeulen M."/>
            <person name="Santamaria A."/>
            <person name="Kumar C."/>
            <person name="Miller M.L."/>
            <person name="Jensen L.J."/>
            <person name="Gnad F."/>
            <person name="Cox J."/>
            <person name="Jensen T.S."/>
            <person name="Nigg E.A."/>
            <person name="Brunak S."/>
            <person name="Mann M."/>
        </authorList>
    </citation>
    <scope>PHOSPHORYLATION [LARGE SCALE ANALYSIS] AT SER-120</scope>
    <scope>VARIANT [LARGE SCALE ANALYSIS] PRO-116</scope>
    <scope>IDENTIFICATION BY MASS SPECTROMETRY [LARGE SCALE ANALYSIS]</scope>
    <source>
        <tissue>Cervix carcinoma</tissue>
    </source>
</reference>
<reference key="7">
    <citation type="journal article" date="2011" name="BMC Syst. Biol.">
        <title>Initial characterization of the human central proteome.</title>
        <authorList>
            <person name="Burkard T.R."/>
            <person name="Planyavsky M."/>
            <person name="Kaupe I."/>
            <person name="Breitwieser F.P."/>
            <person name="Buerckstuemmer T."/>
            <person name="Bennett K.L."/>
            <person name="Superti-Furga G."/>
            <person name="Colinge J."/>
        </authorList>
    </citation>
    <scope>IDENTIFICATION BY MASS SPECTROMETRY [LARGE SCALE ANALYSIS]</scope>
</reference>
<reference key="8">
    <citation type="journal article" date="2012" name="Proc. Natl. Acad. Sci. U.S.A.">
        <title>N-terminal acetylome analyses and functional insights of the N-terminal acetyltransferase NatB.</title>
        <authorList>
            <person name="Van Damme P."/>
            <person name="Lasa M."/>
            <person name="Polevoda B."/>
            <person name="Gazquez C."/>
            <person name="Elosegui-Artola A."/>
            <person name="Kim D.S."/>
            <person name="De Juan-Pardo E."/>
            <person name="Demeyer K."/>
            <person name="Hole K."/>
            <person name="Larrea E."/>
            <person name="Timmerman E."/>
            <person name="Prieto J."/>
            <person name="Arnesen T."/>
            <person name="Sherman F."/>
            <person name="Gevaert K."/>
            <person name="Aldabe R."/>
        </authorList>
    </citation>
    <scope>IDENTIFICATION BY MASS SPECTROMETRY [LARGE SCALE ANALYSIS]</scope>
</reference>
<reference key="9">
    <citation type="journal article" date="2013" name="J. Proteome Res.">
        <title>Toward a comprehensive characterization of a human cancer cell phosphoproteome.</title>
        <authorList>
            <person name="Zhou H."/>
            <person name="Di Palma S."/>
            <person name="Preisinger C."/>
            <person name="Peng M."/>
            <person name="Polat A.N."/>
            <person name="Heck A.J."/>
            <person name="Mohammed S."/>
        </authorList>
    </citation>
    <scope>IDENTIFICATION BY MASS SPECTROMETRY [LARGE SCALE ANALYSIS]</scope>
    <source>
        <tissue>Erythroleukemia</tissue>
    </source>
</reference>
<reference key="10">
    <citation type="journal article" date="2014" name="J. Proteomics">
        <title>An enzyme assisted RP-RPLC approach for in-depth analysis of human liver phosphoproteome.</title>
        <authorList>
            <person name="Bian Y."/>
            <person name="Song C."/>
            <person name="Cheng K."/>
            <person name="Dong M."/>
            <person name="Wang F."/>
            <person name="Huang J."/>
            <person name="Sun D."/>
            <person name="Wang L."/>
            <person name="Ye M."/>
            <person name="Zou H."/>
        </authorList>
    </citation>
    <scope>PHOSPHORYLATION [LARGE SCALE ANALYSIS] AT THR-185; THR-189; SER-196; SER-202 AND SER-261</scope>
    <scope>IDENTIFICATION BY MASS SPECTROMETRY [LARGE SCALE ANALYSIS]</scope>
    <source>
        <tissue>Liver</tissue>
    </source>
</reference>
<feature type="chain" id="PRO_0000274561" description="Protein NOXP20">
    <location>
        <begin position="1"/>
        <end position="563"/>
    </location>
</feature>
<feature type="region of interest" description="Disordered" evidence="4">
    <location>
        <begin position="1"/>
        <end position="84"/>
    </location>
</feature>
<feature type="region of interest" description="Disordered" evidence="4">
    <location>
        <begin position="165"/>
        <end position="206"/>
    </location>
</feature>
<feature type="region of interest" description="Disordered" evidence="4">
    <location>
        <begin position="411"/>
        <end position="436"/>
    </location>
</feature>
<feature type="coiled-coil region" evidence="3">
    <location>
        <begin position="343"/>
        <end position="367"/>
    </location>
</feature>
<feature type="compositionally biased region" description="Low complexity" evidence="4">
    <location>
        <begin position="56"/>
        <end position="68"/>
    </location>
</feature>
<feature type="compositionally biased region" description="Polar residues" evidence="4">
    <location>
        <begin position="166"/>
        <end position="179"/>
    </location>
</feature>
<feature type="modified residue" description="Phosphoserine" evidence="9">
    <location>
        <position position="120"/>
    </location>
</feature>
<feature type="modified residue" description="Phosphothreonine" evidence="10">
    <location>
        <position position="185"/>
    </location>
</feature>
<feature type="modified residue" description="Phosphothreonine" evidence="10">
    <location>
        <position position="189"/>
    </location>
</feature>
<feature type="modified residue" description="Phosphoserine" evidence="8 10">
    <location>
        <position position="196"/>
    </location>
</feature>
<feature type="modified residue" description="Phosphothreonine" evidence="2">
    <location>
        <position position="199"/>
    </location>
</feature>
<feature type="modified residue" description="Phosphoserine" evidence="10">
    <location>
        <position position="202"/>
    </location>
</feature>
<feature type="modified residue" description="Phosphoserine" evidence="10">
    <location>
        <position position="261"/>
    </location>
</feature>
<feature type="splice variant" id="VSP_056466" description="In isoform 2." evidence="6">
    <location>
        <begin position="1"/>
        <end position="207"/>
    </location>
</feature>
<feature type="sequence variant" id="VAR_053823" description="In dbSNP:rs34137542.">
    <original>S</original>
    <variation>L</variation>
    <location>
        <position position="40"/>
    </location>
</feature>
<feature type="sequence variant" id="VAR_030320" description="In dbSNP:rs11096964." evidence="5">
    <original>G</original>
    <variation>R</variation>
    <location>
        <position position="84"/>
    </location>
</feature>
<feature type="sequence variant" id="VAR_030321" description="In dbSNP:rs11555334." evidence="5 9">
    <original>L</original>
    <variation>P</variation>
    <location>
        <position position="116"/>
    </location>
</feature>
<feature type="sequence variant" id="VAR_030322" description="In dbSNP:rs430296.">
    <original>P</original>
    <variation>L</variation>
    <location>
        <position position="201"/>
    </location>
</feature>
<feature type="sequence variant" id="VAR_030323" description="In dbSNP:rs2306923.">
    <original>R</original>
    <variation>H</variation>
    <location>
        <position position="367"/>
    </location>
</feature>
<feature type="sequence variant" id="VAR_030324" description="In dbSNP:rs17429619.">
    <original>V</original>
    <variation>I</variation>
    <location>
        <position position="443"/>
    </location>
</feature>
<feature type="sequence variant" id="VAR_053824" description="In dbSNP:rs36058104.">
    <original>S</original>
    <variation>L</variation>
    <location>
        <position position="446"/>
    </location>
</feature>
<dbReference type="EMBL" id="AK292831">
    <property type="protein sequence ID" value="BAF85520.1"/>
    <property type="molecule type" value="mRNA"/>
</dbReference>
<dbReference type="EMBL" id="BX640862">
    <property type="protein sequence ID" value="CAE45923.1"/>
    <property type="molecule type" value="mRNA"/>
</dbReference>
<dbReference type="EMBL" id="AC108044">
    <property type="status" value="NOT_ANNOTATED_CDS"/>
    <property type="molecule type" value="Genomic_DNA"/>
</dbReference>
<dbReference type="EMBL" id="BC001096">
    <property type="protein sequence ID" value="AAH01096.2"/>
    <property type="molecule type" value="mRNA"/>
</dbReference>
<dbReference type="EMBL" id="BC040452">
    <property type="protein sequence ID" value="AAH40452.1"/>
    <property type="molecule type" value="mRNA"/>
</dbReference>
<dbReference type="CCDS" id="CCDS3447.1">
    <molecule id="Q8IWE2-1"/>
</dbReference>
<dbReference type="CCDS" id="CCDS82916.1">
    <molecule id="Q8IWE2-2"/>
</dbReference>
<dbReference type="RefSeq" id="NP_001317693.1">
    <molecule id="Q8IWE2-2"/>
    <property type="nucleotide sequence ID" value="NM_001330764.2"/>
</dbReference>
<dbReference type="RefSeq" id="NP_001362721.1">
    <molecule id="Q8IWE2-1"/>
    <property type="nucleotide sequence ID" value="NM_001375792.1"/>
</dbReference>
<dbReference type="RefSeq" id="NP_612398.2">
    <molecule id="Q8IWE2-1"/>
    <property type="nucleotide sequence ID" value="NM_138389.4"/>
</dbReference>
<dbReference type="RefSeq" id="XP_005262729.1">
    <property type="nucleotide sequence ID" value="XM_005262672.2"/>
</dbReference>
<dbReference type="RefSeq" id="XP_047272368.1">
    <molecule id="Q8IWE2-2"/>
    <property type="nucleotide sequence ID" value="XM_047416412.1"/>
</dbReference>
<dbReference type="RefSeq" id="XP_054207226.1">
    <molecule id="Q8IWE2-2"/>
    <property type="nucleotide sequence ID" value="XM_054351251.1"/>
</dbReference>
<dbReference type="SMR" id="Q8IWE2"/>
<dbReference type="BioGRID" id="124967">
    <property type="interactions" value="32"/>
</dbReference>
<dbReference type="FunCoup" id="Q8IWE2">
    <property type="interactions" value="1555"/>
</dbReference>
<dbReference type="IntAct" id="Q8IWE2">
    <property type="interactions" value="12"/>
</dbReference>
<dbReference type="STRING" id="9606.ENSP00000351740"/>
<dbReference type="GlyGen" id="Q8IWE2">
    <property type="glycosylation" value="3 sites, 1 O-linked glycan (2 sites)"/>
</dbReference>
<dbReference type="iPTMnet" id="Q8IWE2"/>
<dbReference type="MetOSite" id="Q8IWE2"/>
<dbReference type="PhosphoSitePlus" id="Q8IWE2"/>
<dbReference type="SwissPalm" id="Q8IWE2"/>
<dbReference type="BioMuta" id="FAM114A1"/>
<dbReference type="DMDM" id="229462912"/>
<dbReference type="jPOST" id="Q8IWE2"/>
<dbReference type="MassIVE" id="Q8IWE2"/>
<dbReference type="PaxDb" id="9606-ENSP00000351740"/>
<dbReference type="PeptideAtlas" id="Q8IWE2"/>
<dbReference type="ProteomicsDB" id="66587"/>
<dbReference type="ProteomicsDB" id="70848">
    <molecule id="Q8IWE2-1"/>
</dbReference>
<dbReference type="Pumba" id="Q8IWE2"/>
<dbReference type="Antibodypedia" id="68341">
    <property type="antibodies" value="49 antibodies from 17 providers"/>
</dbReference>
<dbReference type="DNASU" id="92689"/>
<dbReference type="Ensembl" id="ENST00000358869.5">
    <molecule id="Q8IWE2-1"/>
    <property type="protein sequence ID" value="ENSP00000351740.2"/>
    <property type="gene ID" value="ENSG00000197712.12"/>
</dbReference>
<dbReference type="Ensembl" id="ENST00000515037.5">
    <molecule id="Q8IWE2-2"/>
    <property type="protein sequence ID" value="ENSP00000424115.1"/>
    <property type="gene ID" value="ENSG00000197712.12"/>
</dbReference>
<dbReference type="GeneID" id="92689"/>
<dbReference type="KEGG" id="hsa:92689"/>
<dbReference type="MANE-Select" id="ENST00000358869.5">
    <property type="protein sequence ID" value="ENSP00000351740.2"/>
    <property type="RefSeq nucleotide sequence ID" value="NM_138389.4"/>
    <property type="RefSeq protein sequence ID" value="NP_612398.2"/>
</dbReference>
<dbReference type="UCSC" id="uc003gtn.4">
    <molecule id="Q8IWE2-1"/>
    <property type="organism name" value="human"/>
</dbReference>
<dbReference type="AGR" id="HGNC:25087"/>
<dbReference type="CTD" id="92689"/>
<dbReference type="DisGeNET" id="92689"/>
<dbReference type="GeneCards" id="FAM114A1"/>
<dbReference type="HGNC" id="HGNC:25087">
    <property type="gene designation" value="FAM114A1"/>
</dbReference>
<dbReference type="HPA" id="ENSG00000197712">
    <property type="expression patterns" value="Low tissue specificity"/>
</dbReference>
<dbReference type="neXtProt" id="NX_Q8IWE2"/>
<dbReference type="OpenTargets" id="ENSG00000197712"/>
<dbReference type="PharmGKB" id="PA162385681"/>
<dbReference type="VEuPathDB" id="HostDB:ENSG00000197712"/>
<dbReference type="eggNOG" id="ENOG502R83C">
    <property type="taxonomic scope" value="Eukaryota"/>
</dbReference>
<dbReference type="GeneTree" id="ENSGT00390000010054"/>
<dbReference type="HOGENOM" id="CLU_035724_1_0_1"/>
<dbReference type="InParanoid" id="Q8IWE2"/>
<dbReference type="OMA" id="WSTWGKS"/>
<dbReference type="OrthoDB" id="5597648at2759"/>
<dbReference type="PAN-GO" id="Q8IWE2">
    <property type="GO annotations" value="0 GO annotations based on evolutionary models"/>
</dbReference>
<dbReference type="PhylomeDB" id="Q8IWE2"/>
<dbReference type="TreeFam" id="TF324360"/>
<dbReference type="PathwayCommons" id="Q8IWE2"/>
<dbReference type="SignaLink" id="Q8IWE2"/>
<dbReference type="BioGRID-ORCS" id="92689">
    <property type="hits" value="9 hits in 1158 CRISPR screens"/>
</dbReference>
<dbReference type="ChiTaRS" id="FAM114A1">
    <property type="organism name" value="human"/>
</dbReference>
<dbReference type="GeneWiki" id="FAM114A1"/>
<dbReference type="GenomeRNAi" id="92689"/>
<dbReference type="Pharos" id="Q8IWE2">
    <property type="development level" value="Tbio"/>
</dbReference>
<dbReference type="PRO" id="PR:Q8IWE2"/>
<dbReference type="Proteomes" id="UP000005640">
    <property type="component" value="Chromosome 4"/>
</dbReference>
<dbReference type="RNAct" id="Q8IWE2">
    <property type="molecule type" value="protein"/>
</dbReference>
<dbReference type="Bgee" id="ENSG00000197712">
    <property type="expression patterns" value="Expressed in parotid gland and 201 other cell types or tissues"/>
</dbReference>
<dbReference type="ExpressionAtlas" id="Q8IWE2">
    <property type="expression patterns" value="baseline and differential"/>
</dbReference>
<dbReference type="GO" id="GO:0005829">
    <property type="term" value="C:cytosol"/>
    <property type="evidence" value="ECO:0000314"/>
    <property type="project" value="HPA"/>
</dbReference>
<dbReference type="GO" id="GO:0005794">
    <property type="term" value="C:Golgi apparatus"/>
    <property type="evidence" value="ECO:0000314"/>
    <property type="project" value="HPA"/>
</dbReference>
<dbReference type="GO" id="GO:0005654">
    <property type="term" value="C:nucleoplasm"/>
    <property type="evidence" value="ECO:0000314"/>
    <property type="project" value="HPA"/>
</dbReference>
<dbReference type="GO" id="GO:0038166">
    <property type="term" value="P:angiotensin-activated signaling pathway"/>
    <property type="evidence" value="ECO:0007669"/>
    <property type="project" value="Ensembl"/>
</dbReference>
<dbReference type="GO" id="GO:0097709">
    <property type="term" value="P:connective tissue replacement"/>
    <property type="evidence" value="ECO:0007669"/>
    <property type="project" value="Ensembl"/>
</dbReference>
<dbReference type="GO" id="GO:0072537">
    <property type="term" value="P:fibroblast activation"/>
    <property type="evidence" value="ECO:0007669"/>
    <property type="project" value="Ensembl"/>
</dbReference>
<dbReference type="GO" id="GO:0010761">
    <property type="term" value="P:fibroblast migration"/>
    <property type="evidence" value="ECO:0007669"/>
    <property type="project" value="Ensembl"/>
</dbReference>
<dbReference type="GO" id="GO:0048144">
    <property type="term" value="P:fibroblast proliferation"/>
    <property type="evidence" value="ECO:0007669"/>
    <property type="project" value="Ensembl"/>
</dbReference>
<dbReference type="GO" id="GO:0010467">
    <property type="term" value="P:gene expression"/>
    <property type="evidence" value="ECO:0007669"/>
    <property type="project" value="Ensembl"/>
</dbReference>
<dbReference type="GO" id="GO:0003179">
    <property type="term" value="P:heart valve morphogenesis"/>
    <property type="evidence" value="ECO:0007669"/>
    <property type="project" value="Ensembl"/>
</dbReference>
<dbReference type="GO" id="GO:0006954">
    <property type="term" value="P:inflammatory response"/>
    <property type="evidence" value="ECO:0007669"/>
    <property type="project" value="Ensembl"/>
</dbReference>
<dbReference type="InterPro" id="IPR007998">
    <property type="entry name" value="DUF719"/>
</dbReference>
<dbReference type="PANTHER" id="PTHR12842">
    <property type="entry name" value="FI01459P"/>
    <property type="match status" value="1"/>
</dbReference>
<dbReference type="PANTHER" id="PTHR12842:SF4">
    <property type="entry name" value="PROTEIN NOXP20"/>
    <property type="match status" value="1"/>
</dbReference>
<dbReference type="Pfam" id="PF05334">
    <property type="entry name" value="DUF719"/>
    <property type="match status" value="1"/>
</dbReference>
<sequence>MSDDAGDTLATGDKAEVTEMPNSDSLPEDAEVHCDSAAVSHEPTPADPRGEGHENAAVQGAGAAAIGPPVQPQDANALEPPLNGDVTEDTLAECIDSVSLEAEPRSEIPLQEQNYLAVDSPPSGGGWAGWGSWGKSLLSSASATVGHGLTAVKEKAGATLRIHGVNSGSSEGAQPNTENGVPEITDAATDQGPAESPPTSPSSASRGMLSAITNVVQNTGKSVLTGGLDALEFIGKKTMNVLAESDPGFKRTKTLMERTVSLSQMLREAKEKEKQRLAQQLTMERTAHYGMLFDEYQGLSHLEALEILSNESESKVQSFLASLDGEKLELLKNDLISIKDIFAAKELENEENQEEQGLEEKGEEFARMLTELLFELHVAATPDKLNKAMKRAHDWVEEDQTVVSVDVAKVSEEETKKEEKEEKSQDPQEDKKEEKKTKTIEEVYMSSIESLAEVTARCIEQLHKVAELILHGQEEEKPAQDQAKVLIKLTTAMCNEVASLSKKFTNSLTTVGSNKKAEVLNPMISSVLLEGCNSTTYIQDAFQLLLPVLQVSHIQTSCLKAQP</sequence>
<evidence type="ECO:0000250" key="1"/>
<evidence type="ECO:0000250" key="2">
    <source>
        <dbReference type="UniProtKB" id="Q9D281"/>
    </source>
</evidence>
<evidence type="ECO:0000255" key="3"/>
<evidence type="ECO:0000256" key="4">
    <source>
        <dbReference type="SAM" id="MobiDB-lite"/>
    </source>
</evidence>
<evidence type="ECO:0000269" key="5">
    <source>
    </source>
</evidence>
<evidence type="ECO:0000303" key="6">
    <source>
    </source>
</evidence>
<evidence type="ECO:0000305" key="7"/>
<evidence type="ECO:0007744" key="8">
    <source>
    </source>
</evidence>
<evidence type="ECO:0007744" key="9">
    <source>
    </source>
</evidence>
<evidence type="ECO:0007744" key="10">
    <source>
    </source>
</evidence>
<organism>
    <name type="scientific">Homo sapiens</name>
    <name type="common">Human</name>
    <dbReference type="NCBI Taxonomy" id="9606"/>
    <lineage>
        <taxon>Eukaryota</taxon>
        <taxon>Metazoa</taxon>
        <taxon>Chordata</taxon>
        <taxon>Craniata</taxon>
        <taxon>Vertebrata</taxon>
        <taxon>Euteleostomi</taxon>
        <taxon>Mammalia</taxon>
        <taxon>Eutheria</taxon>
        <taxon>Euarchontoglires</taxon>
        <taxon>Primates</taxon>
        <taxon>Haplorrhini</taxon>
        <taxon>Catarrhini</taxon>
        <taxon>Hominidae</taxon>
        <taxon>Homo</taxon>
    </lineage>
</organism>
<proteinExistence type="evidence at protein level"/>
<comment type="function">
    <text evidence="1">May play a role in neuronal cell development.</text>
</comment>
<comment type="interaction">
    <interactant intactId="EBI-2686288">
        <id>Q8IWE2</id>
    </interactant>
    <interactant intactId="EBI-741181">
        <id>Q6RW13</id>
        <label>AGTRAP</label>
    </interactant>
    <organismsDiffer>false</organismsDiffer>
    <experiments>3</experiments>
</comment>
<comment type="interaction">
    <interactant intactId="EBI-2686288">
        <id>Q8IWE2</id>
    </interactant>
    <interactant intactId="EBI-2548702">
        <id>Q96DZ9</id>
        <label>CMTM5</label>
    </interactant>
    <organismsDiffer>false</organismsDiffer>
    <experiments>3</experiments>
</comment>
<comment type="interaction">
    <interactant intactId="EBI-2686288">
        <id>Q8IWE2</id>
    </interactant>
    <interactant intactId="EBI-11522780">
        <id>Q96DZ9-2</id>
        <label>CMTM5</label>
    </interactant>
    <organismsDiffer>false</organismsDiffer>
    <experiments>3</experiments>
</comment>
<comment type="interaction">
    <interactant intactId="EBI-2686288">
        <id>Q8IWE2</id>
    </interactant>
    <interactant intactId="EBI-11110431">
        <id>Q8TB36</id>
        <label>GDAP1</label>
    </interactant>
    <organismsDiffer>false</organismsDiffer>
    <experiments>3</experiments>
</comment>
<comment type="interaction">
    <interactant intactId="EBI-2686288">
        <id>Q8IWE2</id>
    </interactant>
    <interactant intactId="EBI-752037">
        <id>P61019</id>
        <label>RAB2A</label>
    </interactant>
    <organismsDiffer>false</organismsDiffer>
    <experiments>7</experiments>
</comment>
<comment type="interaction">
    <interactant intactId="EBI-2686288">
        <id>Q8IWE2</id>
    </interactant>
    <interactant intactId="EBI-5542466">
        <id>Q8WUD1</id>
        <label>RAB2B</label>
    </interactant>
    <organismsDiffer>false</organismsDiffer>
    <experiments>7</experiments>
</comment>
<comment type="interaction">
    <interactant intactId="EBI-2686288">
        <id>Q8IWE2</id>
    </interactant>
    <interactant intactId="EBI-742688">
        <id>Q9NZD8</id>
        <label>SPG21</label>
    </interactant>
    <organismsDiffer>false</organismsDiffer>
    <experiments>7</experiments>
</comment>
<comment type="interaction">
    <interactant intactId="EBI-2686288">
        <id>Q8IWE2</id>
    </interactant>
    <interactant intactId="EBI-1044859">
        <id>Q9UBN6</id>
        <label>TNFRSF10D</label>
    </interactant>
    <organismsDiffer>false</organismsDiffer>
    <experiments>3</experiments>
</comment>
<comment type="subcellular location">
    <subcellularLocation>
        <location evidence="1">Cytoplasm</location>
    </subcellularLocation>
</comment>
<comment type="alternative products">
    <event type="alternative splicing"/>
    <isoform>
        <id>Q8IWE2-1</id>
        <name>1</name>
        <sequence type="displayed"/>
    </isoform>
    <isoform>
        <id>Q8IWE2-2</id>
        <name>2</name>
        <sequence type="described" ref="VSP_056466"/>
    </isoform>
</comment>
<comment type="similarity">
    <text evidence="7">Belongs to the FAM114 family.</text>
</comment>
<keyword id="KW-0025">Alternative splicing</keyword>
<keyword id="KW-0175">Coiled coil</keyword>
<keyword id="KW-0963">Cytoplasm</keyword>
<keyword id="KW-0597">Phosphoprotein</keyword>
<keyword id="KW-1267">Proteomics identification</keyword>
<keyword id="KW-1185">Reference proteome</keyword>